<keyword id="KW-0067">ATP-binding</keyword>
<keyword id="KW-0963">Cytoplasm</keyword>
<keyword id="KW-0324">Glycolysis</keyword>
<keyword id="KW-0418">Kinase</keyword>
<keyword id="KW-0547">Nucleotide-binding</keyword>
<keyword id="KW-0808">Transferase</keyword>
<name>PGK_CLOBJ</name>
<accession>C1FQW3</accession>
<comment type="catalytic activity">
    <reaction evidence="1">
        <text>(2R)-3-phosphoglycerate + ATP = (2R)-3-phospho-glyceroyl phosphate + ADP</text>
        <dbReference type="Rhea" id="RHEA:14801"/>
        <dbReference type="ChEBI" id="CHEBI:30616"/>
        <dbReference type="ChEBI" id="CHEBI:57604"/>
        <dbReference type="ChEBI" id="CHEBI:58272"/>
        <dbReference type="ChEBI" id="CHEBI:456216"/>
        <dbReference type="EC" id="2.7.2.3"/>
    </reaction>
</comment>
<comment type="pathway">
    <text evidence="1">Carbohydrate degradation; glycolysis; pyruvate from D-glyceraldehyde 3-phosphate: step 2/5.</text>
</comment>
<comment type="subunit">
    <text evidence="1">Monomer.</text>
</comment>
<comment type="subcellular location">
    <subcellularLocation>
        <location evidence="1">Cytoplasm</location>
    </subcellularLocation>
</comment>
<comment type="similarity">
    <text evidence="1">Belongs to the phosphoglycerate kinase family.</text>
</comment>
<sequence length="398" mass="43097">MNYNKKSIEYIDVKGKKVLVRCDFNVPLNEGKITDENRLVGALPTIKYLMEKGAKIILCSHMGKPKGEPKKELSLLPVAKRLSEMLNKEVIFADDDNVVGENAKKAVEDMKDGDVVLLQNTRYRKEETKNEEVFSKELASLADVFVNDAFGTAHRAHCSTVGVTNYLKEAACGYLIQKELKFLGNAVEKPERPFVAILGGAKVSDKINVINNLLDKVDTLIIGGGMGYTFLKAQGYTIGNSLVEEDKVEYSKEMIDKAKEKGVNLLLPIDNVVADKFDKDASPVVTEDQNIGEGYMGLDIGPKTAKIYSDAIKSAKTVVWNGPMGVFEFKSFANGTIEVAKAMADSDAVTIIGGGDSAAAVNILGFGDKMTHISTGGGASLEFLEGKELPGIAALNDK</sequence>
<gene>
    <name evidence="1" type="primary">pgk</name>
    <name type="ordered locus">CLM_0277</name>
</gene>
<protein>
    <recommendedName>
        <fullName evidence="1">Phosphoglycerate kinase</fullName>
        <ecNumber evidence="1">2.7.2.3</ecNumber>
    </recommendedName>
</protein>
<dbReference type="EC" id="2.7.2.3" evidence="1"/>
<dbReference type="EMBL" id="CP001581">
    <property type="protein sequence ID" value="ACO85178.1"/>
    <property type="molecule type" value="Genomic_DNA"/>
</dbReference>
<dbReference type="RefSeq" id="WP_012704617.1">
    <property type="nucleotide sequence ID" value="NC_012563.1"/>
</dbReference>
<dbReference type="SMR" id="C1FQW3"/>
<dbReference type="KEGG" id="cby:CLM_0277"/>
<dbReference type="eggNOG" id="COG0126">
    <property type="taxonomic scope" value="Bacteria"/>
</dbReference>
<dbReference type="HOGENOM" id="CLU_025427_0_2_9"/>
<dbReference type="UniPathway" id="UPA00109">
    <property type="reaction ID" value="UER00185"/>
</dbReference>
<dbReference type="Proteomes" id="UP000001374">
    <property type="component" value="Chromosome"/>
</dbReference>
<dbReference type="GO" id="GO:0005829">
    <property type="term" value="C:cytosol"/>
    <property type="evidence" value="ECO:0007669"/>
    <property type="project" value="TreeGrafter"/>
</dbReference>
<dbReference type="GO" id="GO:0043531">
    <property type="term" value="F:ADP binding"/>
    <property type="evidence" value="ECO:0007669"/>
    <property type="project" value="TreeGrafter"/>
</dbReference>
<dbReference type="GO" id="GO:0005524">
    <property type="term" value="F:ATP binding"/>
    <property type="evidence" value="ECO:0007669"/>
    <property type="project" value="UniProtKB-KW"/>
</dbReference>
<dbReference type="GO" id="GO:0004618">
    <property type="term" value="F:phosphoglycerate kinase activity"/>
    <property type="evidence" value="ECO:0007669"/>
    <property type="project" value="UniProtKB-UniRule"/>
</dbReference>
<dbReference type="GO" id="GO:0006094">
    <property type="term" value="P:gluconeogenesis"/>
    <property type="evidence" value="ECO:0007669"/>
    <property type="project" value="TreeGrafter"/>
</dbReference>
<dbReference type="GO" id="GO:0006096">
    <property type="term" value="P:glycolytic process"/>
    <property type="evidence" value="ECO:0007669"/>
    <property type="project" value="UniProtKB-UniRule"/>
</dbReference>
<dbReference type="CDD" id="cd00318">
    <property type="entry name" value="Phosphoglycerate_kinase"/>
    <property type="match status" value="1"/>
</dbReference>
<dbReference type="FunFam" id="3.40.50.1260:FF:000007">
    <property type="entry name" value="Phosphoglycerate kinase"/>
    <property type="match status" value="1"/>
</dbReference>
<dbReference type="FunFam" id="3.40.50.1260:FF:000008">
    <property type="entry name" value="Phosphoglycerate kinase"/>
    <property type="match status" value="1"/>
</dbReference>
<dbReference type="Gene3D" id="3.40.50.1260">
    <property type="entry name" value="Phosphoglycerate kinase, N-terminal domain"/>
    <property type="match status" value="2"/>
</dbReference>
<dbReference type="HAMAP" id="MF_00145">
    <property type="entry name" value="Phosphoglyc_kinase"/>
    <property type="match status" value="1"/>
</dbReference>
<dbReference type="InterPro" id="IPR001576">
    <property type="entry name" value="Phosphoglycerate_kinase"/>
</dbReference>
<dbReference type="InterPro" id="IPR015911">
    <property type="entry name" value="Phosphoglycerate_kinase_CS"/>
</dbReference>
<dbReference type="InterPro" id="IPR015824">
    <property type="entry name" value="Phosphoglycerate_kinase_N"/>
</dbReference>
<dbReference type="InterPro" id="IPR036043">
    <property type="entry name" value="Phosphoglycerate_kinase_sf"/>
</dbReference>
<dbReference type="PANTHER" id="PTHR11406">
    <property type="entry name" value="PHOSPHOGLYCERATE KINASE"/>
    <property type="match status" value="1"/>
</dbReference>
<dbReference type="PANTHER" id="PTHR11406:SF23">
    <property type="entry name" value="PHOSPHOGLYCERATE KINASE 1, CHLOROPLASTIC-RELATED"/>
    <property type="match status" value="1"/>
</dbReference>
<dbReference type="Pfam" id="PF00162">
    <property type="entry name" value="PGK"/>
    <property type="match status" value="1"/>
</dbReference>
<dbReference type="PIRSF" id="PIRSF000724">
    <property type="entry name" value="Pgk"/>
    <property type="match status" value="1"/>
</dbReference>
<dbReference type="PRINTS" id="PR00477">
    <property type="entry name" value="PHGLYCKINASE"/>
</dbReference>
<dbReference type="SUPFAM" id="SSF53748">
    <property type="entry name" value="Phosphoglycerate kinase"/>
    <property type="match status" value="1"/>
</dbReference>
<dbReference type="PROSITE" id="PS00111">
    <property type="entry name" value="PGLYCERATE_KINASE"/>
    <property type="match status" value="1"/>
</dbReference>
<reference key="1">
    <citation type="submission" date="2008-10" db="EMBL/GenBank/DDBJ databases">
        <title>Genome sequence of Clostridium botulinum A2 Kyoto.</title>
        <authorList>
            <person name="Shrivastava S."/>
            <person name="Brinkac L.M."/>
            <person name="Brown J.L."/>
            <person name="Bruce D."/>
            <person name="Detter C.C."/>
            <person name="Johnson E.A."/>
            <person name="Munk C.A."/>
            <person name="Smith L.A."/>
            <person name="Smith T.J."/>
            <person name="Sutton G."/>
            <person name="Brettin T.S."/>
        </authorList>
    </citation>
    <scope>NUCLEOTIDE SEQUENCE [LARGE SCALE GENOMIC DNA]</scope>
    <source>
        <strain>Kyoto / Type A2</strain>
    </source>
</reference>
<feature type="chain" id="PRO_1000192817" description="Phosphoglycerate kinase">
    <location>
        <begin position="1"/>
        <end position="398"/>
    </location>
</feature>
<feature type="binding site" evidence="1">
    <location>
        <begin position="23"/>
        <end position="25"/>
    </location>
    <ligand>
        <name>substrate</name>
    </ligand>
</feature>
<feature type="binding site" evidence="1">
    <location>
        <position position="38"/>
    </location>
    <ligand>
        <name>substrate</name>
    </ligand>
</feature>
<feature type="binding site" evidence="1">
    <location>
        <begin position="61"/>
        <end position="64"/>
    </location>
    <ligand>
        <name>substrate</name>
    </ligand>
</feature>
<feature type="binding site" evidence="1">
    <location>
        <position position="122"/>
    </location>
    <ligand>
        <name>substrate</name>
    </ligand>
</feature>
<feature type="binding site" evidence="1">
    <location>
        <position position="155"/>
    </location>
    <ligand>
        <name>substrate</name>
    </ligand>
</feature>
<feature type="binding site" evidence="1">
    <location>
        <position position="206"/>
    </location>
    <ligand>
        <name>ATP</name>
        <dbReference type="ChEBI" id="CHEBI:30616"/>
    </ligand>
</feature>
<feature type="binding site" evidence="1">
    <location>
        <position position="297"/>
    </location>
    <ligand>
        <name>ATP</name>
        <dbReference type="ChEBI" id="CHEBI:30616"/>
    </ligand>
</feature>
<feature type="binding site" evidence="1">
    <location>
        <position position="328"/>
    </location>
    <ligand>
        <name>ATP</name>
        <dbReference type="ChEBI" id="CHEBI:30616"/>
    </ligand>
</feature>
<feature type="binding site" evidence="1">
    <location>
        <begin position="354"/>
        <end position="357"/>
    </location>
    <ligand>
        <name>ATP</name>
        <dbReference type="ChEBI" id="CHEBI:30616"/>
    </ligand>
</feature>
<evidence type="ECO:0000255" key="1">
    <source>
        <dbReference type="HAMAP-Rule" id="MF_00145"/>
    </source>
</evidence>
<organism>
    <name type="scientific">Clostridium botulinum (strain Kyoto / Type A2)</name>
    <dbReference type="NCBI Taxonomy" id="536232"/>
    <lineage>
        <taxon>Bacteria</taxon>
        <taxon>Bacillati</taxon>
        <taxon>Bacillota</taxon>
        <taxon>Clostridia</taxon>
        <taxon>Eubacteriales</taxon>
        <taxon>Clostridiaceae</taxon>
        <taxon>Clostridium</taxon>
    </lineage>
</organism>
<proteinExistence type="inferred from homology"/>